<comment type="function">
    <text evidence="2">Regulatory subunit of casein kinase II/CK2 (By similarity). As part of the kinase complex regulates the basal catalytic activity of the alpha subunit a constitutively active serine/threonine-protein kinase that phosphorylates a large number of substrates containing acidic residues C-terminal to the phosphorylated serine or threonine (By similarity).</text>
</comment>
<comment type="subunit">
    <text evidence="1">Tetramer composed of two alpha chains, one beta chain and one beta' chain.</text>
</comment>
<comment type="PTM">
    <text evidence="2">Phosphorylated by alpha subunit.</text>
</comment>
<comment type="similarity">
    <text evidence="4">Belongs to the casein kinase 2 subunit beta family.</text>
</comment>
<sequence>MSSSSGVPESWIASFCSLLGHEYFAEVSEEFIEDDFNLTGLQTQVAMYKEALEMILDVEPEDDDDEEEEDEEDEEDMSGGDGINKPHGERRHHSRIASDLSVIESSAEMLYGLIHQRFICSRAGIQQMSEKYELGHFGICPRTNCNQTRTLPVGLSDTPGEDTVKLFCPSCLDVYVPPNSRFQTVDGAFFGRTFGALFLMTFPEYDLTKTGAESVSNLTRSGSDDTTVINGMYARNIAPGLGRGKIYQPKIYGFKVSEIARSGPRMQWLRSKPDDLSVLDEARRYAEQQGSDDEDESMGVSSRTASRRRGPPRRQKQNGSPMAIEQNGAESEL</sequence>
<keyword id="KW-0597">Phosphoprotein</keyword>
<keyword id="KW-1185">Reference proteome</keyword>
<gene>
    <name type="primary">ckb-1</name>
    <name type="synonym">ckb1</name>
    <name type="ORF">NCU05485</name>
</gene>
<proteinExistence type="evidence at transcript level"/>
<name>CSK2B_NEUCR</name>
<evidence type="ECO:0000250" key="1">
    <source>
        <dbReference type="UniProtKB" id="P43639"/>
    </source>
</evidence>
<evidence type="ECO:0000250" key="2">
    <source>
        <dbReference type="UniProtKB" id="P67870"/>
    </source>
</evidence>
<evidence type="ECO:0000256" key="3">
    <source>
        <dbReference type="SAM" id="MobiDB-lite"/>
    </source>
</evidence>
<evidence type="ECO:0000305" key="4"/>
<reference key="1">
    <citation type="journal article" date="2002" name="Genes Dev.">
        <title>Regulation of the Neurospora circadian clock by casein kinase II.</title>
        <authorList>
            <person name="Yang Y."/>
            <person name="Cheng P."/>
            <person name="Liu Y."/>
        </authorList>
    </citation>
    <scope>NUCLEOTIDE SEQUENCE [MRNA]</scope>
</reference>
<reference key="2">
    <citation type="journal article" date="2003" name="Nature">
        <title>The genome sequence of the filamentous fungus Neurospora crassa.</title>
        <authorList>
            <person name="Galagan J.E."/>
            <person name="Calvo S.E."/>
            <person name="Borkovich K.A."/>
            <person name="Selker E.U."/>
            <person name="Read N.D."/>
            <person name="Jaffe D.B."/>
            <person name="FitzHugh W."/>
            <person name="Ma L.-J."/>
            <person name="Smirnov S."/>
            <person name="Purcell S."/>
            <person name="Rehman B."/>
            <person name="Elkins T."/>
            <person name="Engels R."/>
            <person name="Wang S."/>
            <person name="Nielsen C.B."/>
            <person name="Butler J."/>
            <person name="Endrizzi M."/>
            <person name="Qui D."/>
            <person name="Ianakiev P."/>
            <person name="Bell-Pedersen D."/>
            <person name="Nelson M.A."/>
            <person name="Werner-Washburne M."/>
            <person name="Selitrennikoff C.P."/>
            <person name="Kinsey J.A."/>
            <person name="Braun E.L."/>
            <person name="Zelter A."/>
            <person name="Schulte U."/>
            <person name="Kothe G.O."/>
            <person name="Jedd G."/>
            <person name="Mewes H.-W."/>
            <person name="Staben C."/>
            <person name="Marcotte E."/>
            <person name="Greenberg D."/>
            <person name="Roy A."/>
            <person name="Foley K."/>
            <person name="Naylor J."/>
            <person name="Stange-Thomann N."/>
            <person name="Barrett R."/>
            <person name="Gnerre S."/>
            <person name="Kamal M."/>
            <person name="Kamvysselis M."/>
            <person name="Mauceli E.W."/>
            <person name="Bielke C."/>
            <person name="Rudd S."/>
            <person name="Frishman D."/>
            <person name="Krystofova S."/>
            <person name="Rasmussen C."/>
            <person name="Metzenberg R.L."/>
            <person name="Perkins D.D."/>
            <person name="Kroken S."/>
            <person name="Cogoni C."/>
            <person name="Macino G."/>
            <person name="Catcheside D.E.A."/>
            <person name="Li W."/>
            <person name="Pratt R.J."/>
            <person name="Osmani S.A."/>
            <person name="DeSouza C.P.C."/>
            <person name="Glass N.L."/>
            <person name="Orbach M.J."/>
            <person name="Berglund J.A."/>
            <person name="Voelker R."/>
            <person name="Yarden O."/>
            <person name="Plamann M."/>
            <person name="Seiler S."/>
            <person name="Dunlap J.C."/>
            <person name="Radford A."/>
            <person name="Aramayo R."/>
            <person name="Natvig D.O."/>
            <person name="Alex L.A."/>
            <person name="Mannhaupt G."/>
            <person name="Ebbole D.J."/>
            <person name="Freitag M."/>
            <person name="Paulsen I."/>
            <person name="Sachs M.S."/>
            <person name="Lander E.S."/>
            <person name="Nusbaum C."/>
            <person name="Birren B.W."/>
        </authorList>
    </citation>
    <scope>NUCLEOTIDE SEQUENCE [LARGE SCALE GENOMIC DNA]</scope>
    <source>
        <strain>ATCC 24698 / 74-OR23-1A / CBS 708.71 / DSM 1257 / FGSC 987</strain>
    </source>
</reference>
<accession>Q8TG12</accession>
<accession>Q7S6V4</accession>
<feature type="chain" id="PRO_0000068253" description="Casein kinase II subunit beta-1">
    <location>
        <begin position="1"/>
        <end position="333"/>
    </location>
</feature>
<feature type="region of interest" description="Disordered" evidence="3">
    <location>
        <begin position="58"/>
        <end position="92"/>
    </location>
</feature>
<feature type="region of interest" description="Disordered" evidence="3">
    <location>
        <begin position="282"/>
        <end position="333"/>
    </location>
</feature>
<feature type="compositionally biased region" description="Acidic residues" evidence="3">
    <location>
        <begin position="58"/>
        <end position="78"/>
    </location>
</feature>
<feature type="compositionally biased region" description="Basic residues" evidence="3">
    <location>
        <begin position="305"/>
        <end position="316"/>
    </location>
</feature>
<dbReference type="EMBL" id="AF494377">
    <property type="protein sequence ID" value="AAM14625.1"/>
    <property type="molecule type" value="mRNA"/>
</dbReference>
<dbReference type="EMBL" id="CM002241">
    <property type="protein sequence ID" value="EAA31211.1"/>
    <property type="molecule type" value="Genomic_DNA"/>
</dbReference>
<dbReference type="RefSeq" id="XP_960447.1">
    <property type="nucleotide sequence ID" value="XM_955354.3"/>
</dbReference>
<dbReference type="SMR" id="Q8TG12"/>
<dbReference type="FunCoup" id="Q8TG12">
    <property type="interactions" value="520"/>
</dbReference>
<dbReference type="STRING" id="367110.Q8TG12"/>
<dbReference type="PaxDb" id="5141-EFNCRP00000005501"/>
<dbReference type="EnsemblFungi" id="EAA31211">
    <property type="protein sequence ID" value="EAA31211"/>
    <property type="gene ID" value="NCU05485"/>
</dbReference>
<dbReference type="GeneID" id="3876626"/>
<dbReference type="KEGG" id="ncr:NCU05485"/>
<dbReference type="VEuPathDB" id="FungiDB:NCU05485"/>
<dbReference type="HOGENOM" id="CLU_034027_1_1_1"/>
<dbReference type="InParanoid" id="Q8TG12"/>
<dbReference type="OMA" id="QNGSPMA"/>
<dbReference type="OrthoDB" id="2275560at2759"/>
<dbReference type="Proteomes" id="UP000001805">
    <property type="component" value="Chromosome 5, Linkage Group VI"/>
</dbReference>
<dbReference type="GO" id="GO:0005737">
    <property type="term" value="C:cytoplasm"/>
    <property type="evidence" value="ECO:0000318"/>
    <property type="project" value="GO_Central"/>
</dbReference>
<dbReference type="GO" id="GO:0005956">
    <property type="term" value="C:protein kinase CK2 complex"/>
    <property type="evidence" value="ECO:0000318"/>
    <property type="project" value="GO_Central"/>
</dbReference>
<dbReference type="GO" id="GO:0034456">
    <property type="term" value="C:UTP-C complex"/>
    <property type="evidence" value="ECO:0000318"/>
    <property type="project" value="GO_Central"/>
</dbReference>
<dbReference type="GO" id="GO:0019887">
    <property type="term" value="F:protein kinase regulator activity"/>
    <property type="evidence" value="ECO:0000318"/>
    <property type="project" value="GO_Central"/>
</dbReference>
<dbReference type="GO" id="GO:0006359">
    <property type="term" value="P:regulation of transcription by RNA polymerase III"/>
    <property type="evidence" value="ECO:0000318"/>
    <property type="project" value="GO_Central"/>
</dbReference>
<dbReference type="FunFam" id="1.10.1820.10:FF:000004">
    <property type="entry name" value="Casein kinase II subunit beta"/>
    <property type="match status" value="1"/>
</dbReference>
<dbReference type="FunFam" id="2.20.25.20:FF:000001">
    <property type="entry name" value="Casein kinase II subunit beta"/>
    <property type="match status" value="1"/>
</dbReference>
<dbReference type="Gene3D" id="2.20.25.20">
    <property type="match status" value="1"/>
</dbReference>
<dbReference type="Gene3D" id="1.10.1820.10">
    <property type="entry name" value="protein kinase ck2 holoenzyme, chain C, domain 1"/>
    <property type="match status" value="1"/>
</dbReference>
<dbReference type="InterPro" id="IPR016149">
    <property type="entry name" value="Casein_kin_II_reg-sub_N"/>
</dbReference>
<dbReference type="InterPro" id="IPR035991">
    <property type="entry name" value="Casein_kinase_II_beta-like"/>
</dbReference>
<dbReference type="InterPro" id="IPR000704">
    <property type="entry name" value="Casein_kinase_II_reg-sub"/>
</dbReference>
<dbReference type="PANTHER" id="PTHR11740">
    <property type="entry name" value="CASEIN KINASE II SUBUNIT BETA"/>
    <property type="match status" value="1"/>
</dbReference>
<dbReference type="PANTHER" id="PTHR11740:SF0">
    <property type="entry name" value="CASEIN KINASE II SUBUNIT BETA"/>
    <property type="match status" value="1"/>
</dbReference>
<dbReference type="Pfam" id="PF01214">
    <property type="entry name" value="CK_II_beta"/>
    <property type="match status" value="1"/>
</dbReference>
<dbReference type="PRINTS" id="PR00472">
    <property type="entry name" value="CASNKINASEII"/>
</dbReference>
<dbReference type="SMART" id="SM01085">
    <property type="entry name" value="CK_II_beta"/>
    <property type="match status" value="1"/>
</dbReference>
<dbReference type="SUPFAM" id="SSF57798">
    <property type="entry name" value="Casein kinase II beta subunit"/>
    <property type="match status" value="1"/>
</dbReference>
<dbReference type="PROSITE" id="PS01101">
    <property type="entry name" value="CK2_BETA"/>
    <property type="match status" value="1"/>
</dbReference>
<protein>
    <recommendedName>
        <fullName>Casein kinase II subunit beta-1</fullName>
        <shortName>CK II beta-1</shortName>
    </recommendedName>
</protein>
<organism>
    <name type="scientific">Neurospora crassa (strain ATCC 24698 / 74-OR23-1A / CBS 708.71 / DSM 1257 / FGSC 987)</name>
    <dbReference type="NCBI Taxonomy" id="367110"/>
    <lineage>
        <taxon>Eukaryota</taxon>
        <taxon>Fungi</taxon>
        <taxon>Dikarya</taxon>
        <taxon>Ascomycota</taxon>
        <taxon>Pezizomycotina</taxon>
        <taxon>Sordariomycetes</taxon>
        <taxon>Sordariomycetidae</taxon>
        <taxon>Sordariales</taxon>
        <taxon>Sordariaceae</taxon>
        <taxon>Neurospora</taxon>
    </lineage>
</organism>